<feature type="chain" id="PRO_1000025171" description="Glutamate--cysteine ligase">
    <location>
        <begin position="1"/>
        <end position="518"/>
    </location>
</feature>
<protein>
    <recommendedName>
        <fullName evidence="1">Glutamate--cysteine ligase</fullName>
        <ecNumber evidence="1">6.3.2.2</ecNumber>
    </recommendedName>
    <alternativeName>
        <fullName evidence="1">Gamma-ECS</fullName>
        <shortName evidence="1">GCS</shortName>
    </alternativeName>
    <alternativeName>
        <fullName evidence="1">Gamma-glutamylcysteine synthetase</fullName>
    </alternativeName>
</protein>
<gene>
    <name evidence="1" type="primary">gshA</name>
    <name type="ordered locus">UTI89_C3050</name>
</gene>
<organism>
    <name type="scientific">Escherichia coli (strain UTI89 / UPEC)</name>
    <dbReference type="NCBI Taxonomy" id="364106"/>
    <lineage>
        <taxon>Bacteria</taxon>
        <taxon>Pseudomonadati</taxon>
        <taxon>Pseudomonadota</taxon>
        <taxon>Gammaproteobacteria</taxon>
        <taxon>Enterobacterales</taxon>
        <taxon>Enterobacteriaceae</taxon>
        <taxon>Escherichia</taxon>
    </lineage>
</organism>
<comment type="catalytic activity">
    <reaction evidence="1">
        <text>L-cysteine + L-glutamate + ATP = gamma-L-glutamyl-L-cysteine + ADP + phosphate + H(+)</text>
        <dbReference type="Rhea" id="RHEA:13285"/>
        <dbReference type="ChEBI" id="CHEBI:15378"/>
        <dbReference type="ChEBI" id="CHEBI:29985"/>
        <dbReference type="ChEBI" id="CHEBI:30616"/>
        <dbReference type="ChEBI" id="CHEBI:35235"/>
        <dbReference type="ChEBI" id="CHEBI:43474"/>
        <dbReference type="ChEBI" id="CHEBI:58173"/>
        <dbReference type="ChEBI" id="CHEBI:456216"/>
        <dbReference type="EC" id="6.3.2.2"/>
    </reaction>
</comment>
<comment type="pathway">
    <text evidence="1">Sulfur metabolism; glutathione biosynthesis; glutathione from L-cysteine and L-glutamate: step 1/2.</text>
</comment>
<comment type="similarity">
    <text evidence="1">Belongs to the glutamate--cysteine ligase type 1 family. Type 1 subfamily.</text>
</comment>
<evidence type="ECO:0000255" key="1">
    <source>
        <dbReference type="HAMAP-Rule" id="MF_00578"/>
    </source>
</evidence>
<accession>Q1R808</accession>
<sequence length="518" mass="58269">MIPDVSQALAWLEKHPQALKGIQRGLERETLRVNADGTLATTGHPEALGSALTHKWITTDFAEALLEFITPVDGDIEHMLTFMRDLHRYTARNMGDERMWPLSMPCYIAEGQDIELAQYGTSNTGRFKTLYREGLKNRYGALMQTISGVHYNFSLPMAFWQAKCGDISGADAKEKISAGYFRVIRNYYRFGWVIPYLFGASPAICSSFLQGKPTSLPFEKTECGMYYLPYATSLRLSDLGYTNKSQSNLGITFNDLYEYVAGLKQAIKTPSEEYAKIGIEKDGKRLQINSNVLQIENELYAPIRPKRVTRSGESPSDALLRGGIEYIEVRSLDINPFSPIGVDEQQVRFLDLFMVWCALADAPEMSSSELACTRVNWNRVILEGRKPGLTLGIGCETAQFPLPQVGKDLFRDLKRVAQTLDSINGGEAYQKVCDELVACFDNPDLTFSARILRSMIDTGIGGTGKAFAEAYRNLLREEPLEILREEDFVAEREASERRQQEMEAADTEPFAVWLEKHA</sequence>
<name>GSH1_ECOUT</name>
<keyword id="KW-0067">ATP-binding</keyword>
<keyword id="KW-0317">Glutathione biosynthesis</keyword>
<keyword id="KW-0436">Ligase</keyword>
<keyword id="KW-0547">Nucleotide-binding</keyword>
<proteinExistence type="inferred from homology"/>
<dbReference type="EC" id="6.3.2.2" evidence="1"/>
<dbReference type="EMBL" id="CP000243">
    <property type="protein sequence ID" value="ABE08506.1"/>
    <property type="molecule type" value="Genomic_DNA"/>
</dbReference>
<dbReference type="RefSeq" id="WP_000611804.1">
    <property type="nucleotide sequence ID" value="NZ_CP064825.1"/>
</dbReference>
<dbReference type="SMR" id="Q1R808"/>
<dbReference type="KEGG" id="eci:UTI89_C3050"/>
<dbReference type="HOGENOM" id="CLU_020728_3_0_6"/>
<dbReference type="UniPathway" id="UPA00142">
    <property type="reaction ID" value="UER00209"/>
</dbReference>
<dbReference type="Proteomes" id="UP000001952">
    <property type="component" value="Chromosome"/>
</dbReference>
<dbReference type="GO" id="GO:0005829">
    <property type="term" value="C:cytosol"/>
    <property type="evidence" value="ECO:0007669"/>
    <property type="project" value="TreeGrafter"/>
</dbReference>
<dbReference type="GO" id="GO:0005524">
    <property type="term" value="F:ATP binding"/>
    <property type="evidence" value="ECO:0007669"/>
    <property type="project" value="UniProtKB-KW"/>
</dbReference>
<dbReference type="GO" id="GO:0004357">
    <property type="term" value="F:glutamate-cysteine ligase activity"/>
    <property type="evidence" value="ECO:0007669"/>
    <property type="project" value="UniProtKB-UniRule"/>
</dbReference>
<dbReference type="GO" id="GO:0046872">
    <property type="term" value="F:metal ion binding"/>
    <property type="evidence" value="ECO:0007669"/>
    <property type="project" value="TreeGrafter"/>
</dbReference>
<dbReference type="GO" id="GO:0006750">
    <property type="term" value="P:glutathione biosynthetic process"/>
    <property type="evidence" value="ECO:0007669"/>
    <property type="project" value="UniProtKB-UniRule"/>
</dbReference>
<dbReference type="FunFam" id="3.30.590.20:FF:000001">
    <property type="entry name" value="Glutamate--cysteine ligase"/>
    <property type="match status" value="1"/>
</dbReference>
<dbReference type="Gene3D" id="3.30.590.20">
    <property type="match status" value="1"/>
</dbReference>
<dbReference type="HAMAP" id="MF_00578">
    <property type="entry name" value="Glu_cys_ligase"/>
    <property type="match status" value="1"/>
</dbReference>
<dbReference type="InterPro" id="IPR014746">
    <property type="entry name" value="Gln_synth/guanido_kin_cat_dom"/>
</dbReference>
<dbReference type="InterPro" id="IPR007370">
    <property type="entry name" value="Glu_cys_ligase"/>
</dbReference>
<dbReference type="InterPro" id="IPR006334">
    <property type="entry name" value="Glut_cys_ligase"/>
</dbReference>
<dbReference type="NCBIfam" id="TIGR01434">
    <property type="entry name" value="glu_cys_ligase"/>
    <property type="match status" value="1"/>
</dbReference>
<dbReference type="PANTHER" id="PTHR38761">
    <property type="entry name" value="GLUTAMATE--CYSTEINE LIGASE"/>
    <property type="match status" value="1"/>
</dbReference>
<dbReference type="PANTHER" id="PTHR38761:SF1">
    <property type="entry name" value="GLUTAMATE--CYSTEINE LIGASE"/>
    <property type="match status" value="1"/>
</dbReference>
<dbReference type="Pfam" id="PF04262">
    <property type="entry name" value="Glu_cys_ligase"/>
    <property type="match status" value="1"/>
</dbReference>
<dbReference type="SUPFAM" id="SSF55931">
    <property type="entry name" value="Glutamine synthetase/guanido kinase"/>
    <property type="match status" value="1"/>
</dbReference>
<reference key="1">
    <citation type="journal article" date="2006" name="Proc. Natl. Acad. Sci. U.S.A.">
        <title>Identification of genes subject to positive selection in uropathogenic strains of Escherichia coli: a comparative genomics approach.</title>
        <authorList>
            <person name="Chen S.L."/>
            <person name="Hung C.-S."/>
            <person name="Xu J."/>
            <person name="Reigstad C.S."/>
            <person name="Magrini V."/>
            <person name="Sabo A."/>
            <person name="Blasiar D."/>
            <person name="Bieri T."/>
            <person name="Meyer R.R."/>
            <person name="Ozersky P."/>
            <person name="Armstrong J.R."/>
            <person name="Fulton R.S."/>
            <person name="Latreille J.P."/>
            <person name="Spieth J."/>
            <person name="Hooton T.M."/>
            <person name="Mardis E.R."/>
            <person name="Hultgren S.J."/>
            <person name="Gordon J.I."/>
        </authorList>
    </citation>
    <scope>NUCLEOTIDE SEQUENCE [LARGE SCALE GENOMIC DNA]</scope>
    <source>
        <strain>UTI89 / UPEC</strain>
    </source>
</reference>